<comment type="function">
    <text evidence="1">Catalyzes the attachment of serine to tRNA(Ser). Is also able to aminoacylate tRNA(Sec) with serine, to form the misacylated tRNA L-seryl-tRNA(Sec), which will be further converted into selenocysteinyl-tRNA(Sec).</text>
</comment>
<comment type="catalytic activity">
    <reaction evidence="1">
        <text>tRNA(Ser) + L-serine + ATP = L-seryl-tRNA(Ser) + AMP + diphosphate + H(+)</text>
        <dbReference type="Rhea" id="RHEA:12292"/>
        <dbReference type="Rhea" id="RHEA-COMP:9669"/>
        <dbReference type="Rhea" id="RHEA-COMP:9703"/>
        <dbReference type="ChEBI" id="CHEBI:15378"/>
        <dbReference type="ChEBI" id="CHEBI:30616"/>
        <dbReference type="ChEBI" id="CHEBI:33019"/>
        <dbReference type="ChEBI" id="CHEBI:33384"/>
        <dbReference type="ChEBI" id="CHEBI:78442"/>
        <dbReference type="ChEBI" id="CHEBI:78533"/>
        <dbReference type="ChEBI" id="CHEBI:456215"/>
        <dbReference type="EC" id="6.1.1.11"/>
    </reaction>
</comment>
<comment type="catalytic activity">
    <reaction evidence="1">
        <text>tRNA(Sec) + L-serine + ATP = L-seryl-tRNA(Sec) + AMP + diphosphate + H(+)</text>
        <dbReference type="Rhea" id="RHEA:42580"/>
        <dbReference type="Rhea" id="RHEA-COMP:9742"/>
        <dbReference type="Rhea" id="RHEA-COMP:10128"/>
        <dbReference type="ChEBI" id="CHEBI:15378"/>
        <dbReference type="ChEBI" id="CHEBI:30616"/>
        <dbReference type="ChEBI" id="CHEBI:33019"/>
        <dbReference type="ChEBI" id="CHEBI:33384"/>
        <dbReference type="ChEBI" id="CHEBI:78442"/>
        <dbReference type="ChEBI" id="CHEBI:78533"/>
        <dbReference type="ChEBI" id="CHEBI:456215"/>
        <dbReference type="EC" id="6.1.1.11"/>
    </reaction>
</comment>
<comment type="pathway">
    <text evidence="1">Aminoacyl-tRNA biosynthesis; selenocysteinyl-tRNA(Sec) biosynthesis; L-seryl-tRNA(Sec) from L-serine and tRNA(Sec): step 1/1.</text>
</comment>
<comment type="subunit">
    <text evidence="1">Homodimer. The tRNA molecule binds across the dimer.</text>
</comment>
<comment type="subcellular location">
    <subcellularLocation>
        <location evidence="1">Cytoplasm</location>
    </subcellularLocation>
</comment>
<comment type="domain">
    <text evidence="1">Consists of two distinct domains, a catalytic core and a N-terminal extension that is involved in tRNA binding.</text>
</comment>
<comment type="similarity">
    <text evidence="1">Belongs to the class-II aminoacyl-tRNA synthetase family. Type-1 seryl-tRNA synthetase subfamily.</text>
</comment>
<reference key="1">
    <citation type="journal article" date="2008" name="BMC Genomics">
        <title>Complete genome of Phenylobacterium zucineum - a novel facultative intracellular bacterium isolated from human erythroleukemia cell line K562.</title>
        <authorList>
            <person name="Luo Y."/>
            <person name="Xu X."/>
            <person name="Ding Z."/>
            <person name="Liu Z."/>
            <person name="Zhang B."/>
            <person name="Yan Z."/>
            <person name="Sun J."/>
            <person name="Hu S."/>
            <person name="Hu X."/>
        </authorList>
    </citation>
    <scope>NUCLEOTIDE SEQUENCE [LARGE SCALE GENOMIC DNA]</scope>
    <source>
        <strain>HLK1</strain>
    </source>
</reference>
<feature type="chain" id="PRO_1000098106" description="Serine--tRNA ligase">
    <location>
        <begin position="1"/>
        <end position="426"/>
    </location>
</feature>
<feature type="binding site" evidence="1">
    <location>
        <begin position="230"/>
        <end position="232"/>
    </location>
    <ligand>
        <name>L-serine</name>
        <dbReference type="ChEBI" id="CHEBI:33384"/>
    </ligand>
</feature>
<feature type="binding site" evidence="1">
    <location>
        <begin position="261"/>
        <end position="263"/>
    </location>
    <ligand>
        <name>ATP</name>
        <dbReference type="ChEBI" id="CHEBI:30616"/>
    </ligand>
</feature>
<feature type="binding site" evidence="1">
    <location>
        <position position="284"/>
    </location>
    <ligand>
        <name>L-serine</name>
        <dbReference type="ChEBI" id="CHEBI:33384"/>
    </ligand>
</feature>
<feature type="binding site" evidence="1">
    <location>
        <begin position="348"/>
        <end position="351"/>
    </location>
    <ligand>
        <name>ATP</name>
        <dbReference type="ChEBI" id="CHEBI:30616"/>
    </ligand>
</feature>
<feature type="binding site" evidence="1">
    <location>
        <position position="384"/>
    </location>
    <ligand>
        <name>L-serine</name>
        <dbReference type="ChEBI" id="CHEBI:33384"/>
    </ligand>
</feature>
<sequence length="426" mass="46700">MHDIRAIRETPELYEKAWAAKGSPGKVAEILKLDEALRAAQTALQAAQAERNEASKKIGQAKAQKDEAEATRLMAHVETLKKALEEQGEVERSAGEALRALLAGLPNIPAAEVPDGADEHDNVEVRRWGEPRAIAAPKDHATLGEAMGLMDFEAAARMSGARFVVLKGQLARLERALGQFMLDLQTQEHGYTEVNPPLLVNDAAAYGTDKLPKFAEDLFQTTDGRWLIPTAEVPLTSLVMGQIVAEEELPLRYTALTPCFRSEAGASGRDTRGMIRQHQFNKVELVSITTPEQSADEHERMVGCAEAVLKRLELPFRTMLLCRGDMGFGARKTYDLEVWLPSQEKYREISSCSNTGDFQARRMDARAKKAGEKGTRYVHTLNGSGLAVGRTLVAVLENYQDEGGRIAIPEALRPYMPGMTHIGGAA</sequence>
<evidence type="ECO:0000255" key="1">
    <source>
        <dbReference type="HAMAP-Rule" id="MF_00176"/>
    </source>
</evidence>
<keyword id="KW-0030">Aminoacyl-tRNA synthetase</keyword>
<keyword id="KW-0067">ATP-binding</keyword>
<keyword id="KW-0963">Cytoplasm</keyword>
<keyword id="KW-0436">Ligase</keyword>
<keyword id="KW-0547">Nucleotide-binding</keyword>
<keyword id="KW-0648">Protein biosynthesis</keyword>
<keyword id="KW-1185">Reference proteome</keyword>
<accession>B4RDI1</accession>
<name>SYS_PHEZH</name>
<dbReference type="EC" id="6.1.1.11" evidence="1"/>
<dbReference type="EMBL" id="CP000747">
    <property type="protein sequence ID" value="ACG78371.1"/>
    <property type="molecule type" value="Genomic_DNA"/>
</dbReference>
<dbReference type="RefSeq" id="WP_012522513.1">
    <property type="nucleotide sequence ID" value="NC_011144.1"/>
</dbReference>
<dbReference type="SMR" id="B4RDI1"/>
<dbReference type="STRING" id="450851.PHZ_c1960"/>
<dbReference type="KEGG" id="pzu:PHZ_c1960"/>
<dbReference type="eggNOG" id="COG0172">
    <property type="taxonomic scope" value="Bacteria"/>
</dbReference>
<dbReference type="HOGENOM" id="CLU_023797_1_1_5"/>
<dbReference type="OrthoDB" id="9804647at2"/>
<dbReference type="UniPathway" id="UPA00906">
    <property type="reaction ID" value="UER00895"/>
</dbReference>
<dbReference type="Proteomes" id="UP000001868">
    <property type="component" value="Chromosome"/>
</dbReference>
<dbReference type="GO" id="GO:0005737">
    <property type="term" value="C:cytoplasm"/>
    <property type="evidence" value="ECO:0007669"/>
    <property type="project" value="UniProtKB-SubCell"/>
</dbReference>
<dbReference type="GO" id="GO:0005524">
    <property type="term" value="F:ATP binding"/>
    <property type="evidence" value="ECO:0007669"/>
    <property type="project" value="UniProtKB-UniRule"/>
</dbReference>
<dbReference type="GO" id="GO:0004828">
    <property type="term" value="F:serine-tRNA ligase activity"/>
    <property type="evidence" value="ECO:0007669"/>
    <property type="project" value="UniProtKB-UniRule"/>
</dbReference>
<dbReference type="GO" id="GO:0016260">
    <property type="term" value="P:selenocysteine biosynthetic process"/>
    <property type="evidence" value="ECO:0007669"/>
    <property type="project" value="UniProtKB-UniRule"/>
</dbReference>
<dbReference type="GO" id="GO:0006434">
    <property type="term" value="P:seryl-tRNA aminoacylation"/>
    <property type="evidence" value="ECO:0007669"/>
    <property type="project" value="UniProtKB-UniRule"/>
</dbReference>
<dbReference type="CDD" id="cd00770">
    <property type="entry name" value="SerRS_core"/>
    <property type="match status" value="1"/>
</dbReference>
<dbReference type="Gene3D" id="3.30.930.10">
    <property type="entry name" value="Bira Bifunctional Protein, Domain 2"/>
    <property type="match status" value="1"/>
</dbReference>
<dbReference type="Gene3D" id="1.10.287.40">
    <property type="entry name" value="Serine-tRNA synthetase, tRNA binding domain"/>
    <property type="match status" value="1"/>
</dbReference>
<dbReference type="HAMAP" id="MF_00176">
    <property type="entry name" value="Ser_tRNA_synth_type1"/>
    <property type="match status" value="1"/>
</dbReference>
<dbReference type="InterPro" id="IPR002314">
    <property type="entry name" value="aa-tRNA-synt_IIb"/>
</dbReference>
<dbReference type="InterPro" id="IPR006195">
    <property type="entry name" value="aa-tRNA-synth_II"/>
</dbReference>
<dbReference type="InterPro" id="IPR045864">
    <property type="entry name" value="aa-tRNA-synth_II/BPL/LPL"/>
</dbReference>
<dbReference type="InterPro" id="IPR002317">
    <property type="entry name" value="Ser-tRNA-ligase_type_1"/>
</dbReference>
<dbReference type="InterPro" id="IPR015866">
    <property type="entry name" value="Ser-tRNA-synth_1_N"/>
</dbReference>
<dbReference type="InterPro" id="IPR042103">
    <property type="entry name" value="SerRS_1_N_sf"/>
</dbReference>
<dbReference type="InterPro" id="IPR033729">
    <property type="entry name" value="SerRS_core"/>
</dbReference>
<dbReference type="InterPro" id="IPR010978">
    <property type="entry name" value="tRNA-bd_arm"/>
</dbReference>
<dbReference type="NCBIfam" id="TIGR00414">
    <property type="entry name" value="serS"/>
    <property type="match status" value="1"/>
</dbReference>
<dbReference type="PANTHER" id="PTHR43697:SF1">
    <property type="entry name" value="SERINE--TRNA LIGASE"/>
    <property type="match status" value="1"/>
</dbReference>
<dbReference type="PANTHER" id="PTHR43697">
    <property type="entry name" value="SERYL-TRNA SYNTHETASE"/>
    <property type="match status" value="1"/>
</dbReference>
<dbReference type="Pfam" id="PF02403">
    <property type="entry name" value="Seryl_tRNA_N"/>
    <property type="match status" value="1"/>
</dbReference>
<dbReference type="Pfam" id="PF00587">
    <property type="entry name" value="tRNA-synt_2b"/>
    <property type="match status" value="1"/>
</dbReference>
<dbReference type="PIRSF" id="PIRSF001529">
    <property type="entry name" value="Ser-tRNA-synth_IIa"/>
    <property type="match status" value="1"/>
</dbReference>
<dbReference type="PRINTS" id="PR00981">
    <property type="entry name" value="TRNASYNTHSER"/>
</dbReference>
<dbReference type="SUPFAM" id="SSF55681">
    <property type="entry name" value="Class II aaRS and biotin synthetases"/>
    <property type="match status" value="1"/>
</dbReference>
<dbReference type="SUPFAM" id="SSF46589">
    <property type="entry name" value="tRNA-binding arm"/>
    <property type="match status" value="1"/>
</dbReference>
<dbReference type="PROSITE" id="PS50862">
    <property type="entry name" value="AA_TRNA_LIGASE_II"/>
    <property type="match status" value="1"/>
</dbReference>
<proteinExistence type="inferred from homology"/>
<protein>
    <recommendedName>
        <fullName evidence="1">Serine--tRNA ligase</fullName>
        <ecNumber evidence="1">6.1.1.11</ecNumber>
    </recommendedName>
    <alternativeName>
        <fullName evidence="1">Seryl-tRNA synthetase</fullName>
        <shortName evidence="1">SerRS</shortName>
    </alternativeName>
    <alternativeName>
        <fullName evidence="1">Seryl-tRNA(Ser/Sec) synthetase</fullName>
    </alternativeName>
</protein>
<organism>
    <name type="scientific">Phenylobacterium zucineum (strain HLK1)</name>
    <dbReference type="NCBI Taxonomy" id="450851"/>
    <lineage>
        <taxon>Bacteria</taxon>
        <taxon>Pseudomonadati</taxon>
        <taxon>Pseudomonadota</taxon>
        <taxon>Alphaproteobacteria</taxon>
        <taxon>Caulobacterales</taxon>
        <taxon>Caulobacteraceae</taxon>
        <taxon>Phenylobacterium</taxon>
    </lineage>
</organism>
<gene>
    <name evidence="1" type="primary">serS</name>
    <name type="ordered locus">PHZ_c1960</name>
</gene>